<comment type="subcellular location">
    <subcellularLocation>
        <location evidence="2">Nucleus</location>
    </subcellularLocation>
</comment>
<comment type="similarity">
    <text evidence="2">Belongs to the engrailed homeobox family.</text>
</comment>
<proteinExistence type="inferred from homology"/>
<name>HMENB_MYXGL</name>
<accession>P31536</accession>
<keyword id="KW-0217">Developmental protein</keyword>
<keyword id="KW-0238">DNA-binding</keyword>
<keyword id="KW-0371">Homeobox</keyword>
<keyword id="KW-0539">Nucleus</keyword>
<dbReference type="EMBL" id="X59121">
    <property type="protein sequence ID" value="CAA41844.1"/>
    <property type="status" value="ALT_TERM"/>
    <property type="molecule type" value="Genomic_DNA"/>
</dbReference>
<dbReference type="SMR" id="P31536"/>
<dbReference type="GO" id="GO:0005634">
    <property type="term" value="C:nucleus"/>
    <property type="evidence" value="ECO:0007669"/>
    <property type="project" value="UniProtKB-SubCell"/>
</dbReference>
<dbReference type="GO" id="GO:0000981">
    <property type="term" value="F:DNA-binding transcription factor activity, RNA polymerase II-specific"/>
    <property type="evidence" value="ECO:0007669"/>
    <property type="project" value="InterPro"/>
</dbReference>
<dbReference type="GO" id="GO:0000978">
    <property type="term" value="F:RNA polymerase II cis-regulatory region sequence-specific DNA binding"/>
    <property type="evidence" value="ECO:0007669"/>
    <property type="project" value="TreeGrafter"/>
</dbReference>
<dbReference type="GO" id="GO:0030182">
    <property type="term" value="P:neuron differentiation"/>
    <property type="evidence" value="ECO:0007669"/>
    <property type="project" value="TreeGrafter"/>
</dbReference>
<dbReference type="CDD" id="cd00086">
    <property type="entry name" value="homeodomain"/>
    <property type="match status" value="1"/>
</dbReference>
<dbReference type="Gene3D" id="1.10.10.60">
    <property type="entry name" value="Homeodomain-like"/>
    <property type="match status" value="1"/>
</dbReference>
<dbReference type="InterPro" id="IPR050720">
    <property type="entry name" value="Engrailed_Homeobox_TFs"/>
</dbReference>
<dbReference type="InterPro" id="IPR001356">
    <property type="entry name" value="HD"/>
</dbReference>
<dbReference type="InterPro" id="IPR020479">
    <property type="entry name" value="HD_metazoa"/>
</dbReference>
<dbReference type="InterPro" id="IPR017970">
    <property type="entry name" value="Homeobox_CS"/>
</dbReference>
<dbReference type="InterPro" id="IPR009057">
    <property type="entry name" value="Homeodomain-like_sf"/>
</dbReference>
<dbReference type="PANTHER" id="PTHR24341">
    <property type="entry name" value="HOMEOBOX PROTEIN ENGRAILED"/>
    <property type="match status" value="1"/>
</dbReference>
<dbReference type="PANTHER" id="PTHR24341:SF6">
    <property type="entry name" value="HOMEOBOX PROTEIN INVECTED"/>
    <property type="match status" value="1"/>
</dbReference>
<dbReference type="Pfam" id="PF00046">
    <property type="entry name" value="Homeodomain"/>
    <property type="match status" value="1"/>
</dbReference>
<dbReference type="PRINTS" id="PR00024">
    <property type="entry name" value="HOMEOBOX"/>
</dbReference>
<dbReference type="SMART" id="SM00389">
    <property type="entry name" value="HOX"/>
    <property type="match status" value="1"/>
</dbReference>
<dbReference type="SUPFAM" id="SSF46689">
    <property type="entry name" value="Homeodomain-like"/>
    <property type="match status" value="1"/>
</dbReference>
<dbReference type="PROSITE" id="PS00027">
    <property type="entry name" value="HOMEOBOX_1"/>
    <property type="match status" value="1"/>
</dbReference>
<dbReference type="PROSITE" id="PS50071">
    <property type="entry name" value="HOMEOBOX_2"/>
    <property type="match status" value="1"/>
</dbReference>
<protein>
    <recommendedName>
        <fullName>Homeobox protein engrailed-like B</fullName>
        <shortName>EN-B</shortName>
    </recommendedName>
</protein>
<sequence>VEQLQRLKSEFGASRYLTEARRQALAQELRLNEAQIKIWFQNKRAKLKKANGLRNPLALH</sequence>
<organism>
    <name type="scientific">Myxine glutinosa</name>
    <name type="common">Atlantic hagfish</name>
    <dbReference type="NCBI Taxonomy" id="7769"/>
    <lineage>
        <taxon>Eukaryota</taxon>
        <taxon>Metazoa</taxon>
        <taxon>Chordata</taxon>
        <taxon>Craniata</taxon>
        <taxon>Vertebrata</taxon>
        <taxon>Cyclostomata</taxon>
        <taxon>Myxini</taxon>
        <taxon>Myxiniformes</taxon>
        <taxon>Myxinidae</taxon>
        <taxon>Myxininae</taxon>
        <taxon>Myxine</taxon>
    </lineage>
</organism>
<evidence type="ECO:0000255" key="1">
    <source>
        <dbReference type="PROSITE-ProRule" id="PRU00108"/>
    </source>
</evidence>
<evidence type="ECO:0000305" key="2"/>
<reference key="1">
    <citation type="journal article" date="1990" name="FEBS Lett.">
        <title>Conservation of engrailed-like homeobox sequences during vertebrate evolution.</title>
        <authorList>
            <person name="Holland P.W.H."/>
            <person name="Williams N.A."/>
        </authorList>
    </citation>
    <scope>NUCLEOTIDE SEQUENCE [GENOMIC DNA]</scope>
    <source>
        <tissue>Muscle</tissue>
    </source>
</reference>
<feature type="chain" id="PRO_0000196088" description="Homeobox protein engrailed-like B">
    <location>
        <begin position="1" status="less than"/>
        <end position="60" status="greater than"/>
    </location>
</feature>
<feature type="DNA-binding region" description="Homeobox" evidence="1">
    <location>
        <begin position="1" status="less than"/>
        <end position="41"/>
    </location>
</feature>
<feature type="non-terminal residue">
    <location>
        <position position="1"/>
    </location>
</feature>
<feature type="non-terminal residue">
    <location>
        <position position="60"/>
    </location>
</feature>